<evidence type="ECO:0000250" key="1">
    <source>
        <dbReference type="UniProtKB" id="P07614"/>
    </source>
</evidence>
<evidence type="ECO:0000256" key="2">
    <source>
        <dbReference type="SAM" id="MobiDB-lite"/>
    </source>
</evidence>
<evidence type="ECO:0000305" key="3"/>
<protein>
    <recommendedName>
        <fullName>Protein OPG097</fullName>
    </recommendedName>
</protein>
<name>PG097_MONPV</name>
<proteinExistence type="inferred from homology"/>
<sequence>MNTRTDVTNDNIDKNPTKRGDRNIPGRNERFNDQNRFNNDRPQPNQPPRQDNKYREENGDFINIRLCAYEKEYCNDGYLSPAYYMLKQVDDEEMSCWSELSSLVRSRKAVGFPLLKAAKRISHGSMLYFEQFKNSKVVRLTPQVKCLNDTVIFQTVVILYSMYKRGIYSNEFCFNLVSIPRTNIVFSVNQLMFNICTDILVVLSICGNRLYRTNLPQSCYLNFIHGHETIARRGYEHSNYFFEWLIKNHISLLTKQTMDILKVKKKYATGAPVNRLLEPGTLVYVPKEDYYFIGISLTDVSISDNVRVLFSTDGIVLEIEDFNIKHLFMAGEMFVRSQSSTIIV</sequence>
<dbReference type="EMBL" id="KC257461">
    <property type="protein sequence ID" value="AGF36986.1"/>
    <property type="molecule type" value="Genomic_DNA"/>
</dbReference>
<dbReference type="EMBL" id="MT903340">
    <property type="protein sequence ID" value="QNP12952.1"/>
    <property type="molecule type" value="Genomic_DNA"/>
</dbReference>
<dbReference type="RefSeq" id="YP_010377079.1">
    <property type="nucleotide sequence ID" value="NC_063383.1"/>
</dbReference>
<dbReference type="GeneID" id="72551492"/>
<dbReference type="Proteomes" id="UP000516359">
    <property type="component" value="Genome"/>
</dbReference>
<dbReference type="GO" id="GO:0030430">
    <property type="term" value="C:host cell cytoplasm"/>
    <property type="evidence" value="ECO:0007669"/>
    <property type="project" value="UniProtKB-SubCell"/>
</dbReference>
<dbReference type="GO" id="GO:0044423">
    <property type="term" value="C:virion component"/>
    <property type="evidence" value="ECO:0007669"/>
    <property type="project" value="UniProtKB-KW"/>
</dbReference>
<dbReference type="InterPro" id="IPR005007">
    <property type="entry name" value="Poxvirus_L3/FP4"/>
</dbReference>
<dbReference type="Pfam" id="PF03339">
    <property type="entry name" value="Pox_L3_FP4"/>
    <property type="match status" value="1"/>
</dbReference>
<gene>
    <name type="primary">OPG097</name>
    <name type="ORF">MPXVgp082</name>
</gene>
<organismHost>
    <name type="scientific">Cynomys gunnisoni</name>
    <name type="common">Gunnison's prairie dog</name>
    <name type="synonym">Spermophilus gunnisoni</name>
    <dbReference type="NCBI Taxonomy" id="45479"/>
</organismHost>
<organismHost>
    <name type="scientific">Cynomys leucurus</name>
    <name type="common">White-tailed prairie dog</name>
    <dbReference type="NCBI Taxonomy" id="99825"/>
</organismHost>
<organismHost>
    <name type="scientific">Cynomys ludovicianus</name>
    <name type="common">Black-tailed prairie dog</name>
    <dbReference type="NCBI Taxonomy" id="45480"/>
</organismHost>
<organismHost>
    <name type="scientific">Cynomys mexicanus</name>
    <name type="common">Mexican prairie dog</name>
    <dbReference type="NCBI Taxonomy" id="99826"/>
</organismHost>
<organismHost>
    <name type="scientific">Cynomys parvidens</name>
    <name type="common">Utah prairie dog</name>
    <dbReference type="NCBI Taxonomy" id="99827"/>
</organismHost>
<organismHost>
    <name type="scientific">Gliridae</name>
    <name type="common">dormice</name>
    <dbReference type="NCBI Taxonomy" id="30650"/>
</organismHost>
<organismHost>
    <name type="scientific">Heliosciurus ruwenzorii</name>
    <name type="common">Ruwenzori sun squirrel</name>
    <dbReference type="NCBI Taxonomy" id="226685"/>
</organismHost>
<organismHost>
    <name type="scientific">Homo sapiens</name>
    <name type="common">Human</name>
    <dbReference type="NCBI Taxonomy" id="9606"/>
</organismHost>
<organismHost>
    <name type="scientific">Mus musculus</name>
    <name type="common">Mouse</name>
    <dbReference type="NCBI Taxonomy" id="10090"/>
</organismHost>
<feature type="chain" id="PRO_0000457679" description="Protein OPG097">
    <location>
        <begin position="1"/>
        <end position="344"/>
    </location>
</feature>
<feature type="region of interest" description="Disordered" evidence="2">
    <location>
        <begin position="1"/>
        <end position="55"/>
    </location>
</feature>
<feature type="compositionally biased region" description="Polar residues" evidence="2">
    <location>
        <begin position="1"/>
        <end position="10"/>
    </location>
</feature>
<feature type="compositionally biased region" description="Basic and acidic residues" evidence="2">
    <location>
        <begin position="11"/>
        <end position="33"/>
    </location>
</feature>
<feature type="compositionally biased region" description="Low complexity" evidence="2">
    <location>
        <begin position="34"/>
        <end position="43"/>
    </location>
</feature>
<comment type="function">
    <text evidence="1">Might be required to be present in the virion for transcription of early genes after primo infection.</text>
</comment>
<comment type="subcellular location">
    <subcellularLocation>
        <location evidence="1">Virion</location>
    </subcellularLocation>
    <subcellularLocation>
        <location evidence="1">Host cytoplasm</location>
    </subcellularLocation>
    <text evidence="1">Localizes in cytoplasmic virus factories and present in the virion core.</text>
</comment>
<comment type="induction">
    <text evidence="1">Expressed in the late phase of the viral replicative cycle.</text>
</comment>
<comment type="similarity">
    <text evidence="3">Belongs to the orthopoxvirus OPG097 family.</text>
</comment>
<reference key="1">
    <citation type="journal article" date="2013" name="Am. J. Trop. Med. Hyg.">
        <title>Detection of human monkeypox in the republic of the congo following intensive community education.</title>
        <authorList>
            <person name="Reynolds M.G."/>
            <person name="Emerson G.L."/>
            <person name="Pukuta E."/>
            <person name="Karhemere S."/>
            <person name="Muyembe J.J."/>
            <person name="Bikindou A."/>
            <person name="McCollum A.M."/>
            <person name="Moses C."/>
            <person name="Wilkins K."/>
            <person name="Zhao H."/>
            <person name="Damon I.K."/>
            <person name="Karem K.L."/>
            <person name="Li Y."/>
            <person name="Carroll D.S."/>
            <person name="Mombouli J.V."/>
        </authorList>
    </citation>
    <scope>NUCLEOTIDE SEQUENCE</scope>
    <source>
        <strain>ROC2010</strain>
    </source>
</reference>
<reference key="2">
    <citation type="journal article" date="2022" name="J. Infect. Dis.">
        <title>Exportation of Monkeypox virus from the African continent.</title>
        <authorList>
            <person name="Mauldin M.R."/>
            <person name="McCollum A.M."/>
            <person name="Nakazawa Y.J."/>
            <person name="Mandra A."/>
            <person name="Whitehouse E.R."/>
            <person name="Davidson W."/>
            <person name="Zhao H."/>
            <person name="Gao J."/>
            <person name="Li Y."/>
            <person name="Doty J."/>
            <person name="Yinka-Ogunleye A."/>
            <person name="Akinpelu A."/>
            <person name="Aruna O."/>
            <person name="Naidoo D."/>
            <person name="Lewandowski K."/>
            <person name="Afrough B."/>
            <person name="Graham V."/>
            <person name="Aarons E."/>
            <person name="Hewson R."/>
            <person name="Vipond R."/>
            <person name="Dunning J."/>
            <person name="Chand M."/>
            <person name="Brown C."/>
            <person name="Cohen-Gihon I."/>
            <person name="Erez N."/>
            <person name="Shifman O."/>
            <person name="Israeli O."/>
            <person name="Sharon M."/>
            <person name="Schwartz E."/>
            <person name="Beth-Din A."/>
            <person name="Zvi A."/>
            <person name="Mak T.M."/>
            <person name="Ng Y.K."/>
            <person name="Cui L."/>
            <person name="Lin R.T.P."/>
            <person name="Olson V.A."/>
            <person name="Brooks T."/>
            <person name="Paran N."/>
            <person name="Ihekweazu C."/>
            <person name="Reynolds M.G."/>
        </authorList>
    </citation>
    <scope>NUCLEOTIDE SEQUENCE [LARGE SCALE GENOMIC DNA]</scope>
    <source>
        <strain>MPXV-M5312_HM12_Rivers</strain>
    </source>
</reference>
<organism>
    <name type="scientific">Monkeypox virus</name>
    <dbReference type="NCBI Taxonomy" id="10244"/>
    <lineage>
        <taxon>Viruses</taxon>
        <taxon>Varidnaviria</taxon>
        <taxon>Bamfordvirae</taxon>
        <taxon>Nucleocytoviricota</taxon>
        <taxon>Pokkesviricetes</taxon>
        <taxon>Chitovirales</taxon>
        <taxon>Poxviridae</taxon>
        <taxon>Chordopoxvirinae</taxon>
        <taxon>Orthopoxvirus</taxon>
    </lineage>
</organism>
<accession>A0A7H0DN69</accession>
<keyword id="KW-1035">Host cytoplasm</keyword>
<keyword id="KW-0426">Late protein</keyword>
<keyword id="KW-1185">Reference proteome</keyword>
<keyword id="KW-0946">Virion</keyword>